<sequence length="299" mass="34084">MTFKSGFVAILGRPNVGKSTFLNHVMGQKIAIMSDKAQTTRNKIMGIYTTDKEQIVFIDTPGIHKPKTALGDFMVEAAYSTLREVDTVLFMVPADEPRGKGDDMIIERLKAAKVPVILVVNKIDKVHPDQLLAQIDDFRQQMDFKEIVPISALQGNNVSRLVDILSENLEEGFQYFPEDQITDHPERFLVSEMIREKVLMLTREEIPHSVAVVIDSMKRDEETDKVHIRATIMVERDSQKGIIIGKGGSMLKKIGSMARRDIELMLGDKVFLETWVKVKKNWRDKKLDLADFGYNKKEY</sequence>
<feature type="chain" id="PRO_0000180056" description="GTPase Era">
    <location>
        <begin position="1"/>
        <end position="299"/>
    </location>
</feature>
<feature type="domain" description="Era-type G" evidence="2">
    <location>
        <begin position="4"/>
        <end position="171"/>
    </location>
</feature>
<feature type="domain" description="KH type-2" evidence="1">
    <location>
        <begin position="202"/>
        <end position="280"/>
    </location>
</feature>
<feature type="region of interest" description="G1" evidence="2">
    <location>
        <begin position="12"/>
        <end position="19"/>
    </location>
</feature>
<feature type="region of interest" description="G2" evidence="2">
    <location>
        <begin position="38"/>
        <end position="42"/>
    </location>
</feature>
<feature type="region of interest" description="G3" evidence="2">
    <location>
        <begin position="59"/>
        <end position="62"/>
    </location>
</feature>
<feature type="region of interest" description="G4" evidence="2">
    <location>
        <begin position="121"/>
        <end position="124"/>
    </location>
</feature>
<feature type="region of interest" description="G5" evidence="2">
    <location>
        <begin position="150"/>
        <end position="152"/>
    </location>
</feature>
<feature type="binding site" evidence="1">
    <location>
        <begin position="12"/>
        <end position="19"/>
    </location>
    <ligand>
        <name>GTP</name>
        <dbReference type="ChEBI" id="CHEBI:37565"/>
    </ligand>
</feature>
<feature type="binding site" evidence="1">
    <location>
        <begin position="59"/>
        <end position="63"/>
    </location>
    <ligand>
        <name>GTP</name>
        <dbReference type="ChEBI" id="CHEBI:37565"/>
    </ligand>
</feature>
<feature type="binding site" evidence="1">
    <location>
        <begin position="121"/>
        <end position="124"/>
    </location>
    <ligand>
        <name>GTP</name>
        <dbReference type="ChEBI" id="CHEBI:37565"/>
    </ligand>
</feature>
<evidence type="ECO:0000255" key="1">
    <source>
        <dbReference type="HAMAP-Rule" id="MF_00367"/>
    </source>
</evidence>
<evidence type="ECO:0000255" key="2">
    <source>
        <dbReference type="PROSITE-ProRule" id="PRU01050"/>
    </source>
</evidence>
<organism>
    <name type="scientific">Streptococcus gordonii (strain Challis / ATCC 35105 / BCRC 15272 / CH1 / DL1 / V288)</name>
    <dbReference type="NCBI Taxonomy" id="467705"/>
    <lineage>
        <taxon>Bacteria</taxon>
        <taxon>Bacillati</taxon>
        <taxon>Bacillota</taxon>
        <taxon>Bacilli</taxon>
        <taxon>Lactobacillales</taxon>
        <taxon>Streptococcaceae</taxon>
        <taxon>Streptococcus</taxon>
    </lineage>
</organism>
<dbReference type="EMBL" id="AB003804">
    <property type="protein sequence ID" value="BAA23582.1"/>
    <property type="molecule type" value="Genomic_DNA"/>
</dbReference>
<dbReference type="EMBL" id="CP000725">
    <property type="protein sequence ID" value="ABV10813.1"/>
    <property type="molecule type" value="Genomic_DNA"/>
</dbReference>
<dbReference type="RefSeq" id="WP_012000181.1">
    <property type="nucleotide sequence ID" value="NC_009785.1"/>
</dbReference>
<dbReference type="SMR" id="O24756"/>
<dbReference type="STRING" id="467705.SGO_0713"/>
<dbReference type="KEGG" id="sgo:SGO_0713"/>
<dbReference type="eggNOG" id="COG1159">
    <property type="taxonomic scope" value="Bacteria"/>
</dbReference>
<dbReference type="HOGENOM" id="CLU_038009_1_0_9"/>
<dbReference type="Proteomes" id="UP000001131">
    <property type="component" value="Chromosome"/>
</dbReference>
<dbReference type="GO" id="GO:0005829">
    <property type="term" value="C:cytosol"/>
    <property type="evidence" value="ECO:0007669"/>
    <property type="project" value="TreeGrafter"/>
</dbReference>
<dbReference type="GO" id="GO:0005886">
    <property type="term" value="C:plasma membrane"/>
    <property type="evidence" value="ECO:0007669"/>
    <property type="project" value="UniProtKB-SubCell"/>
</dbReference>
<dbReference type="GO" id="GO:0005525">
    <property type="term" value="F:GTP binding"/>
    <property type="evidence" value="ECO:0007669"/>
    <property type="project" value="UniProtKB-UniRule"/>
</dbReference>
<dbReference type="GO" id="GO:0003924">
    <property type="term" value="F:GTPase activity"/>
    <property type="evidence" value="ECO:0007669"/>
    <property type="project" value="UniProtKB-UniRule"/>
</dbReference>
<dbReference type="GO" id="GO:0043024">
    <property type="term" value="F:ribosomal small subunit binding"/>
    <property type="evidence" value="ECO:0007669"/>
    <property type="project" value="TreeGrafter"/>
</dbReference>
<dbReference type="GO" id="GO:0070181">
    <property type="term" value="F:small ribosomal subunit rRNA binding"/>
    <property type="evidence" value="ECO:0007669"/>
    <property type="project" value="UniProtKB-UniRule"/>
</dbReference>
<dbReference type="GO" id="GO:0000028">
    <property type="term" value="P:ribosomal small subunit assembly"/>
    <property type="evidence" value="ECO:0007669"/>
    <property type="project" value="TreeGrafter"/>
</dbReference>
<dbReference type="CDD" id="cd04163">
    <property type="entry name" value="Era"/>
    <property type="match status" value="1"/>
</dbReference>
<dbReference type="CDD" id="cd22534">
    <property type="entry name" value="KH-II_Era"/>
    <property type="match status" value="1"/>
</dbReference>
<dbReference type="FunFam" id="3.30.300.20:FF:000003">
    <property type="entry name" value="GTPase Era"/>
    <property type="match status" value="1"/>
</dbReference>
<dbReference type="FunFam" id="3.40.50.300:FF:000094">
    <property type="entry name" value="GTPase Era"/>
    <property type="match status" value="1"/>
</dbReference>
<dbReference type="Gene3D" id="3.30.300.20">
    <property type="match status" value="1"/>
</dbReference>
<dbReference type="Gene3D" id="3.40.50.300">
    <property type="entry name" value="P-loop containing nucleotide triphosphate hydrolases"/>
    <property type="match status" value="1"/>
</dbReference>
<dbReference type="HAMAP" id="MF_00367">
    <property type="entry name" value="GTPase_Era"/>
    <property type="match status" value="1"/>
</dbReference>
<dbReference type="InterPro" id="IPR030388">
    <property type="entry name" value="G_ERA_dom"/>
</dbReference>
<dbReference type="InterPro" id="IPR006073">
    <property type="entry name" value="GTP-bd"/>
</dbReference>
<dbReference type="InterPro" id="IPR005662">
    <property type="entry name" value="GTPase_Era-like"/>
</dbReference>
<dbReference type="InterPro" id="IPR015946">
    <property type="entry name" value="KH_dom-like_a/b"/>
</dbReference>
<dbReference type="InterPro" id="IPR004044">
    <property type="entry name" value="KH_dom_type_2"/>
</dbReference>
<dbReference type="InterPro" id="IPR009019">
    <property type="entry name" value="KH_sf_prok-type"/>
</dbReference>
<dbReference type="InterPro" id="IPR027417">
    <property type="entry name" value="P-loop_NTPase"/>
</dbReference>
<dbReference type="InterPro" id="IPR005225">
    <property type="entry name" value="Small_GTP-bd"/>
</dbReference>
<dbReference type="NCBIfam" id="TIGR00436">
    <property type="entry name" value="era"/>
    <property type="match status" value="1"/>
</dbReference>
<dbReference type="NCBIfam" id="NF000908">
    <property type="entry name" value="PRK00089.1"/>
    <property type="match status" value="1"/>
</dbReference>
<dbReference type="NCBIfam" id="TIGR00231">
    <property type="entry name" value="small_GTP"/>
    <property type="match status" value="1"/>
</dbReference>
<dbReference type="PANTHER" id="PTHR42698">
    <property type="entry name" value="GTPASE ERA"/>
    <property type="match status" value="1"/>
</dbReference>
<dbReference type="PANTHER" id="PTHR42698:SF1">
    <property type="entry name" value="GTPASE ERA, MITOCHONDRIAL"/>
    <property type="match status" value="1"/>
</dbReference>
<dbReference type="Pfam" id="PF07650">
    <property type="entry name" value="KH_2"/>
    <property type="match status" value="1"/>
</dbReference>
<dbReference type="Pfam" id="PF01926">
    <property type="entry name" value="MMR_HSR1"/>
    <property type="match status" value="1"/>
</dbReference>
<dbReference type="SUPFAM" id="SSF52540">
    <property type="entry name" value="P-loop containing nucleoside triphosphate hydrolases"/>
    <property type="match status" value="1"/>
</dbReference>
<dbReference type="SUPFAM" id="SSF54814">
    <property type="entry name" value="Prokaryotic type KH domain (KH-domain type II)"/>
    <property type="match status" value="1"/>
</dbReference>
<dbReference type="PROSITE" id="PS51713">
    <property type="entry name" value="G_ERA"/>
    <property type="match status" value="1"/>
</dbReference>
<dbReference type="PROSITE" id="PS50823">
    <property type="entry name" value="KH_TYPE_2"/>
    <property type="match status" value="1"/>
</dbReference>
<protein>
    <recommendedName>
        <fullName evidence="1">GTPase Era</fullName>
    </recommendedName>
</protein>
<comment type="function">
    <text evidence="1">An essential GTPase that binds both GDP and GTP, with rapid nucleotide exchange. Plays a role in 16S rRNA processing and 30S ribosomal subunit biogenesis and possibly also in cell cycle regulation and energy metabolism.</text>
</comment>
<comment type="subunit">
    <text evidence="1">Monomer.</text>
</comment>
<comment type="subcellular location">
    <subcellularLocation>
        <location>Cytoplasm</location>
    </subcellularLocation>
    <subcellularLocation>
        <location evidence="1">Cell membrane</location>
        <topology evidence="1">Peripheral membrane protein</topology>
    </subcellularLocation>
</comment>
<comment type="similarity">
    <text evidence="1 2">Belongs to the TRAFAC class TrmE-Era-EngA-EngB-Septin-like GTPase superfamily. Era GTPase family.</text>
</comment>
<proteinExistence type="inferred from homology"/>
<name>ERA_STRGC</name>
<gene>
    <name evidence="1" type="primary">era</name>
    <name type="synonym">sgg</name>
    <name type="ordered locus">SGO_0713</name>
</gene>
<keyword id="KW-1003">Cell membrane</keyword>
<keyword id="KW-0963">Cytoplasm</keyword>
<keyword id="KW-0342">GTP-binding</keyword>
<keyword id="KW-0472">Membrane</keyword>
<keyword id="KW-0547">Nucleotide-binding</keyword>
<keyword id="KW-1185">Reference proteome</keyword>
<keyword id="KW-0690">Ribosome biogenesis</keyword>
<keyword id="KW-0694">RNA-binding</keyword>
<keyword id="KW-0699">rRNA-binding</keyword>
<accession>O24756</accession>
<accession>A8AW54</accession>
<reference key="1">
    <citation type="journal article" date="1997" name="FEMS Microbiol. Lett.">
        <title>Nucleotide sequence and molecular characterization of a gene encoding GTP-binding protein from Streptococcus gordonii.</title>
        <authorList>
            <person name="Kawabata S."/>
            <person name="Terao Y."/>
            <person name="Andoh T."/>
            <person name="Hamada S."/>
        </authorList>
    </citation>
    <scope>NUCLEOTIDE SEQUENCE [GENOMIC DNA]</scope>
</reference>
<reference key="2">
    <citation type="journal article" date="2007" name="J. Bacteriol.">
        <title>Genome-wide transcriptional changes in Streptococcus gordonii in response to competence signaling peptide.</title>
        <authorList>
            <person name="Vickerman M.M."/>
            <person name="Iobst S."/>
            <person name="Jesionowski A.M."/>
            <person name="Gill S.R."/>
        </authorList>
    </citation>
    <scope>NUCLEOTIDE SEQUENCE [LARGE SCALE GENOMIC DNA]</scope>
    <source>
        <strain>Challis / ATCC 35105 / BCRC 15272 / CH1 / DL1 / V288</strain>
    </source>
</reference>